<dbReference type="EMBL" id="CP001215">
    <property type="protein sequence ID" value="ACP12313.1"/>
    <property type="molecule type" value="Genomic_DNA"/>
</dbReference>
<dbReference type="RefSeq" id="WP_000868940.1">
    <property type="nucleotide sequence ID" value="NC_012581.1"/>
</dbReference>
<dbReference type="SMR" id="C3L8Z4"/>
<dbReference type="KEGG" id="bah:BAMEG_4892"/>
<dbReference type="HOGENOM" id="CLU_070010_4_1_9"/>
<dbReference type="GO" id="GO:0016787">
    <property type="term" value="F:hydrolase activity"/>
    <property type="evidence" value="ECO:0007669"/>
    <property type="project" value="UniProtKB-UniRule"/>
</dbReference>
<dbReference type="Gene3D" id="3.60.15.10">
    <property type="entry name" value="Ribonuclease Z/Hydroxyacylglutathione hydrolase-like"/>
    <property type="match status" value="1"/>
</dbReference>
<dbReference type="HAMAP" id="MF_00457">
    <property type="entry name" value="UPF0173"/>
    <property type="match status" value="1"/>
</dbReference>
<dbReference type="InterPro" id="IPR001279">
    <property type="entry name" value="Metallo-B-lactamas"/>
</dbReference>
<dbReference type="InterPro" id="IPR036866">
    <property type="entry name" value="RibonucZ/Hydroxyglut_hydro"/>
</dbReference>
<dbReference type="InterPro" id="IPR022877">
    <property type="entry name" value="UPF0173"/>
</dbReference>
<dbReference type="InterPro" id="IPR050114">
    <property type="entry name" value="UPF0173_UPF0282_UlaG_hydrolase"/>
</dbReference>
<dbReference type="NCBIfam" id="NF001911">
    <property type="entry name" value="PRK00685.1"/>
    <property type="match status" value="1"/>
</dbReference>
<dbReference type="PANTHER" id="PTHR43546:SF3">
    <property type="entry name" value="UPF0173 METAL-DEPENDENT HYDROLASE MJ1163"/>
    <property type="match status" value="1"/>
</dbReference>
<dbReference type="PANTHER" id="PTHR43546">
    <property type="entry name" value="UPF0173 METAL-DEPENDENT HYDROLASE MJ1163-RELATED"/>
    <property type="match status" value="1"/>
</dbReference>
<dbReference type="Pfam" id="PF12706">
    <property type="entry name" value="Lactamase_B_2"/>
    <property type="match status" value="1"/>
</dbReference>
<dbReference type="SMART" id="SM00849">
    <property type="entry name" value="Lactamase_B"/>
    <property type="match status" value="1"/>
</dbReference>
<dbReference type="SUPFAM" id="SSF56281">
    <property type="entry name" value="Metallo-hydrolase/oxidoreductase"/>
    <property type="match status" value="1"/>
</dbReference>
<organism>
    <name type="scientific">Bacillus anthracis (strain CDC 684 / NRRL 3495)</name>
    <dbReference type="NCBI Taxonomy" id="568206"/>
    <lineage>
        <taxon>Bacteria</taxon>
        <taxon>Bacillati</taxon>
        <taxon>Bacillota</taxon>
        <taxon>Bacilli</taxon>
        <taxon>Bacillales</taxon>
        <taxon>Bacillaceae</taxon>
        <taxon>Bacillus</taxon>
        <taxon>Bacillus cereus group</taxon>
    </lineage>
</organism>
<feature type="chain" id="PRO_1000197805" description="UPF0173 metal-dependent hydrolase BAMEG_4892">
    <location>
        <begin position="1"/>
        <end position="227"/>
    </location>
</feature>
<accession>C3L8Z4</accession>
<evidence type="ECO:0000255" key="1">
    <source>
        <dbReference type="HAMAP-Rule" id="MF_00457"/>
    </source>
</evidence>
<protein>
    <recommendedName>
        <fullName evidence="1">UPF0173 metal-dependent hydrolase BAMEG_4892</fullName>
    </recommendedName>
</protein>
<keyword id="KW-0378">Hydrolase</keyword>
<reference key="1">
    <citation type="submission" date="2008-10" db="EMBL/GenBank/DDBJ databases">
        <title>Genome sequence of Bacillus anthracis str. CDC 684.</title>
        <authorList>
            <person name="Dodson R.J."/>
            <person name="Munk A.C."/>
            <person name="Brettin T."/>
            <person name="Bruce D."/>
            <person name="Detter C."/>
            <person name="Tapia R."/>
            <person name="Han C."/>
            <person name="Sutton G."/>
            <person name="Sims D."/>
        </authorList>
    </citation>
    <scope>NUCLEOTIDE SEQUENCE [LARGE SCALE GENOMIC DNA]</scope>
    <source>
        <strain>CDC 684 / NRRL 3495</strain>
    </source>
</reference>
<name>Y4892_BACAC</name>
<sequence length="227" mass="24889">MKVSYHGHSVVKIETNGKVILIDPFLTGNPKTDLKAEDVKVDAILLSHGHGDHVGDTVELAKKNNAVVVAPFELATFLSWQGVNTHPMHIGGSHEFDFGKVKFTQAFHGSSYIDEENKTITYTGMPAGILFTAEEKTLYHAGDTALFSDMKLIGELNNIDVAFLPIGDNFTMGPEDAVLAAKWVQAKTVVPMHYNTFPVIEQDPYQFVEKLQNCTGKVLEAGESITL</sequence>
<gene>
    <name type="ordered locus">BAMEG_4892</name>
</gene>
<proteinExistence type="inferred from homology"/>
<comment type="similarity">
    <text evidence="1">Belongs to the UPF0173 family.</text>
</comment>